<proteinExistence type="evidence at protein level"/>
<dbReference type="EC" id="2.1.1.-" evidence="1"/>
<dbReference type="EMBL" id="MBFL02000005">
    <property type="protein sequence ID" value="KAF7597142.1"/>
    <property type="molecule type" value="Genomic_DNA"/>
</dbReference>
<dbReference type="SMR" id="P0DUL6"/>
<dbReference type="OrthoDB" id="10251242at2759"/>
<dbReference type="GO" id="GO:0046872">
    <property type="term" value="F:metal ion binding"/>
    <property type="evidence" value="ECO:0007669"/>
    <property type="project" value="UniProtKB-KW"/>
</dbReference>
<dbReference type="GO" id="GO:0008171">
    <property type="term" value="F:O-methyltransferase activity"/>
    <property type="evidence" value="ECO:0007669"/>
    <property type="project" value="InterPro"/>
</dbReference>
<dbReference type="GO" id="GO:0008757">
    <property type="term" value="F:S-adenosylmethionine-dependent methyltransferase activity"/>
    <property type="evidence" value="ECO:0007669"/>
    <property type="project" value="TreeGrafter"/>
</dbReference>
<dbReference type="GO" id="GO:0032259">
    <property type="term" value="P:methylation"/>
    <property type="evidence" value="ECO:0007669"/>
    <property type="project" value="UniProtKB-KW"/>
</dbReference>
<dbReference type="CDD" id="cd02440">
    <property type="entry name" value="AdoMet_MTases"/>
    <property type="match status" value="1"/>
</dbReference>
<dbReference type="Gene3D" id="3.40.50.150">
    <property type="entry name" value="Vaccinia Virus protein VP39"/>
    <property type="match status" value="1"/>
</dbReference>
<dbReference type="InterPro" id="IPR050362">
    <property type="entry name" value="Cation-dep_OMT"/>
</dbReference>
<dbReference type="InterPro" id="IPR029063">
    <property type="entry name" value="SAM-dependent_MTases_sf"/>
</dbReference>
<dbReference type="InterPro" id="IPR002935">
    <property type="entry name" value="SAM_O-MeTrfase"/>
</dbReference>
<dbReference type="PANTHER" id="PTHR10509:SF14">
    <property type="entry name" value="CAFFEOYL-COA O-METHYLTRANSFERASE 3-RELATED"/>
    <property type="match status" value="1"/>
</dbReference>
<dbReference type="PANTHER" id="PTHR10509">
    <property type="entry name" value="O-METHYLTRANSFERASE-RELATED"/>
    <property type="match status" value="1"/>
</dbReference>
<dbReference type="Pfam" id="PF01596">
    <property type="entry name" value="Methyltransf_3"/>
    <property type="match status" value="1"/>
</dbReference>
<dbReference type="SUPFAM" id="SSF53335">
    <property type="entry name" value="S-adenosyl-L-methionine-dependent methyltransferases"/>
    <property type="match status" value="1"/>
</dbReference>
<dbReference type="PROSITE" id="PS51682">
    <property type="entry name" value="SAM_OMT_I"/>
    <property type="match status" value="1"/>
</dbReference>
<accession>P0DUL6</accession>
<feature type="chain" id="PRO_0000452935" description="O-methyltransferase hkm8">
    <location>
        <begin position="1"/>
        <end position="252"/>
    </location>
</feature>
<feature type="binding site" evidence="1">
    <location>
        <position position="73"/>
    </location>
    <ligand>
        <name>S-adenosyl-L-methionine</name>
        <dbReference type="ChEBI" id="CHEBI:59789"/>
    </ligand>
</feature>
<feature type="binding site" evidence="1">
    <location>
        <begin position="75"/>
        <end position="76"/>
    </location>
    <ligand>
        <name>S-adenosyl-L-methionine</name>
        <dbReference type="ChEBI" id="CHEBI:59789"/>
    </ligand>
</feature>
<feature type="binding site" evidence="1">
    <location>
        <position position="81"/>
    </location>
    <ligand>
        <name>S-adenosyl-L-methionine</name>
        <dbReference type="ChEBI" id="CHEBI:59789"/>
    </ligand>
</feature>
<feature type="binding site" evidence="1">
    <location>
        <position position="100"/>
    </location>
    <ligand>
        <name>S-adenosyl-L-methionine</name>
        <dbReference type="ChEBI" id="CHEBI:59789"/>
    </ligand>
</feature>
<name>HKM8_ASPHA</name>
<reference key="1">
    <citation type="submission" date="2019-04" db="EMBL/GenBank/DDBJ databases">
        <authorList>
            <person name="Gilchrist C.L.M."/>
            <person name="Chooi Y.H."/>
        </authorList>
    </citation>
    <scope>NUCLEOTIDE SEQUENCE [LARGE SCALE GENOMIC DNA]</scope>
    <source>
        <strain>FRR 3425 / CBS 142004 / DTO 360-G7</strain>
    </source>
</reference>
<reference key="2">
    <citation type="journal article" date="2021" name="Org. Biomol. Chem.">
        <title>Hancockiamides: phenylpropanoid piperazines from Aspergillus hancockii are biosynthesised by a versatile dual single-module NRPS pathway.</title>
        <authorList>
            <person name="Li H."/>
            <person name="Lacey A.E."/>
            <person name="Shu S."/>
            <person name="Kalaitzis J.A."/>
            <person name="Vuong D."/>
            <person name="Crombie A."/>
            <person name="Hu J."/>
            <person name="Gilchrist C.L.M."/>
            <person name="Lacey E."/>
            <person name="Piggott A.M."/>
            <person name="Chooi Y.H."/>
        </authorList>
    </citation>
    <scope>FUNCTION</scope>
    <scope>PATHWAY</scope>
    <scope>BIOTECHNOLOGY</scope>
</reference>
<organism>
    <name type="scientific">Aspergillus hancockii</name>
    <dbReference type="NCBI Taxonomy" id="1873369"/>
    <lineage>
        <taxon>Eukaryota</taxon>
        <taxon>Fungi</taxon>
        <taxon>Dikarya</taxon>
        <taxon>Ascomycota</taxon>
        <taxon>Pezizomycotina</taxon>
        <taxon>Eurotiomycetes</taxon>
        <taxon>Eurotiomycetidae</taxon>
        <taxon>Eurotiales</taxon>
        <taxon>Aspergillaceae</taxon>
        <taxon>Aspergillus</taxon>
        <taxon>Aspergillus subgen. Circumdati</taxon>
    </lineage>
</organism>
<evidence type="ECO:0000255" key="1">
    <source>
        <dbReference type="PROSITE-ProRule" id="PRU01019"/>
    </source>
</evidence>
<evidence type="ECO:0000269" key="2">
    <source>
    </source>
</evidence>
<evidence type="ECO:0000303" key="3">
    <source>
    </source>
</evidence>
<evidence type="ECO:0000305" key="4">
    <source>
    </source>
</evidence>
<sequence length="252" mass="29031">MRDRCMLSFTKEQLTSVGEYCTLHSSPLPKSVEEQCRVTDERSQDEVVMAPSPAQCAWLMSFALASRPRRILELGTFTGVSTLAFYEGTRKTKAEIITVDMSEEYLQIAETAFRRHGATDRIQTIRGPCLEILPTITGEFDLIYIDAAEEEYEAYTRFVLDHKLLSAEGVMLVDDGTYIRWFYFFQANWWSVLLEGLVVDRSIVKEFPEEIQEPYLGIADQMNDFNRYARSDPRVEVTMIPLFNGVTQITWK</sequence>
<comment type="function">
    <text evidence="2 4">O-methyltransferase; part of the gene cluster that mediates the biosynthesis of hancockiamides, an unusual new family of N-cinnamoylated piperazines (PubMed:33242032). The NRPS hkm10 and the NmrA-like reductase hkm9 are proposed to convert two molecules of L-Phe to the intermediary piperazine called xenocockiamide A (Probable). Xenocockiamide A is then converted to hancockiamide D via a series of hydroxylations and O-methylations (Probable). The tyrosinase hkm6 may catalyze an aromatic hydroxylation, then the 2-oxoglutarate-dependent Fe(II) dioxygenase hkm4 and the FAD-dependent phenol hydroxylase hkm7 may catalyze consecutive hydroxylations to install 2 more hydroxy groups, and the methyltransferase hkm8 probably catalyzes two methylations using 2 molecules of S-adenosyl-L-methionine (SAM) (Probable). The NRPS hkm11 activates and transfers trans-cinnamate supplied by the PAL hkm12 to hancockiamide D and produces hancockiamide A (PubMed:33242032). NRPS Hkm11 has the flexibility to tolerate the bulky hancockiamide G as a substrate and the absence of the acetyl-transferase hkm3 opens up the opportunity for hkm11 to introduce a second N-cinnamoyl moiety (PubMed:33242032). The cytochrome P450 monooxygenase hkm5 catalyzes the methylenedioxy bridge formation, converting hancockiamide A into hancockiamide G (PubMed:33242032). Hkm5 can also convert hancockiamide B into hancockiamide C, and hancockiamide D into hancockiamide H (PubMed:33242032). The N-acetyltransferase hkm3 finally transfers an acetyl group to 1-N of piperazine, converting hancockiamide A into hancockiamide B and hancockiamide G into hancockiamide C (PubMed:33242032).</text>
</comment>
<comment type="pathway">
    <text evidence="4">Secondary metabolite biosynthesis.</text>
</comment>
<comment type="biotechnology">
    <text evidence="2">Hancockiamide D displays potent cytotoxic activity against murine myeloma NS-1 cells, suggesting a potential antitumour application (PubMed:33242032). More interestingly, hancockiamide C, the likely end metabolite of the hkm pathway, shows potent Arabidopsis thaliana seed anti-germination activity, but is inactive against the monocot Eragrostis tef seed, suggesting that it could be a herbicidal lead targeting monocots (PubMed:33242032). The herbicidal activity of hancockiamide C could be due to its phenylpropanoid-like structural features, which may act on the plant lignan pathways, and hence warrants further investigations (PubMed:33242032).</text>
</comment>
<comment type="similarity">
    <text evidence="1">Belongs to the class I-like SAM-binding methyltransferase superfamily. Cation-dependent O-methyltransferase family.</text>
</comment>
<keyword id="KW-0479">Metal-binding</keyword>
<keyword id="KW-0489">Methyltransferase</keyword>
<keyword id="KW-0949">S-adenosyl-L-methionine</keyword>
<keyword id="KW-0808">Transferase</keyword>
<protein>
    <recommendedName>
        <fullName evidence="3">O-methyltransferase hkm8</fullName>
        <ecNumber evidence="1">2.1.1.-</ecNumber>
    </recommendedName>
    <alternativeName>
        <fullName evidence="3">Hancockiamides biosynthesis cluster protein 8</fullName>
    </alternativeName>
</protein>